<reference key="1">
    <citation type="journal article" date="2006" name="Lancet">
        <title>Complete genome sequence of USA300, an epidemic clone of community-acquired meticillin-resistant Staphylococcus aureus.</title>
        <authorList>
            <person name="Diep B.A."/>
            <person name="Gill S.R."/>
            <person name="Chang R.F."/>
            <person name="Phan T.H."/>
            <person name="Chen J.H."/>
            <person name="Davidson M.G."/>
            <person name="Lin F."/>
            <person name="Lin J."/>
            <person name="Carleton H.A."/>
            <person name="Mongodin E.F."/>
            <person name="Sensabaugh G.F."/>
            <person name="Perdreau-Remington F."/>
        </authorList>
    </citation>
    <scope>NUCLEOTIDE SEQUENCE [LARGE SCALE GENOMIC DNA]</scope>
    <source>
        <strain>USA300</strain>
    </source>
</reference>
<sequence length="144" mass="16242">MLLPKRVKYRRQHRPKTTGRSKGGNYVTFGEFGLQATTTSWITSRQIESARIAMTRYMKRGGKVWIKIFPHTPYTKKPLEVRMGAGKGAVEGWIAVVKPGRILFEVAGVSEEVAREALRLASHKLPVKTKFVKREELGGETNES</sequence>
<accession>Q2FEP6</accession>
<evidence type="ECO:0000255" key="1">
    <source>
        <dbReference type="HAMAP-Rule" id="MF_01342"/>
    </source>
</evidence>
<evidence type="ECO:0000256" key="2">
    <source>
        <dbReference type="SAM" id="MobiDB-lite"/>
    </source>
</evidence>
<evidence type="ECO:0000305" key="3"/>
<comment type="function">
    <text evidence="1">Binds 23S rRNA and is also seen to make contacts with the A and possibly P site tRNAs.</text>
</comment>
<comment type="subunit">
    <text evidence="1">Part of the 50S ribosomal subunit.</text>
</comment>
<comment type="similarity">
    <text evidence="1">Belongs to the universal ribosomal protein uL16 family.</text>
</comment>
<feature type="chain" id="PRO_0000251676" description="Large ribosomal subunit protein uL16">
    <location>
        <begin position="1"/>
        <end position="144"/>
    </location>
</feature>
<feature type="region of interest" description="Disordered" evidence="2">
    <location>
        <begin position="1"/>
        <end position="23"/>
    </location>
</feature>
<feature type="compositionally biased region" description="Basic residues" evidence="2">
    <location>
        <begin position="1"/>
        <end position="19"/>
    </location>
</feature>
<proteinExistence type="inferred from homology"/>
<name>RL16_STAA3</name>
<organism>
    <name type="scientific">Staphylococcus aureus (strain USA300)</name>
    <dbReference type="NCBI Taxonomy" id="367830"/>
    <lineage>
        <taxon>Bacteria</taxon>
        <taxon>Bacillati</taxon>
        <taxon>Bacillota</taxon>
        <taxon>Bacilli</taxon>
        <taxon>Bacillales</taxon>
        <taxon>Staphylococcaceae</taxon>
        <taxon>Staphylococcus</taxon>
    </lineage>
</organism>
<dbReference type="EMBL" id="CP000255">
    <property type="protein sequence ID" value="ABD22820.1"/>
    <property type="molecule type" value="Genomic_DNA"/>
</dbReference>
<dbReference type="RefSeq" id="WP_000926310.1">
    <property type="nucleotide sequence ID" value="NZ_CP027476.1"/>
</dbReference>
<dbReference type="SMR" id="Q2FEP6"/>
<dbReference type="GeneID" id="98346555"/>
<dbReference type="KEGG" id="saa:SAUSA300_2197"/>
<dbReference type="HOGENOM" id="CLU_078858_2_1_9"/>
<dbReference type="Proteomes" id="UP000001939">
    <property type="component" value="Chromosome"/>
</dbReference>
<dbReference type="GO" id="GO:0022625">
    <property type="term" value="C:cytosolic large ribosomal subunit"/>
    <property type="evidence" value="ECO:0007669"/>
    <property type="project" value="TreeGrafter"/>
</dbReference>
<dbReference type="GO" id="GO:0019843">
    <property type="term" value="F:rRNA binding"/>
    <property type="evidence" value="ECO:0007669"/>
    <property type="project" value="UniProtKB-UniRule"/>
</dbReference>
<dbReference type="GO" id="GO:0003735">
    <property type="term" value="F:structural constituent of ribosome"/>
    <property type="evidence" value="ECO:0007669"/>
    <property type="project" value="InterPro"/>
</dbReference>
<dbReference type="GO" id="GO:0000049">
    <property type="term" value="F:tRNA binding"/>
    <property type="evidence" value="ECO:0007669"/>
    <property type="project" value="UniProtKB-KW"/>
</dbReference>
<dbReference type="GO" id="GO:0006412">
    <property type="term" value="P:translation"/>
    <property type="evidence" value="ECO:0007669"/>
    <property type="project" value="UniProtKB-UniRule"/>
</dbReference>
<dbReference type="CDD" id="cd01433">
    <property type="entry name" value="Ribosomal_L16_L10e"/>
    <property type="match status" value="1"/>
</dbReference>
<dbReference type="FunFam" id="3.90.1170.10:FF:000001">
    <property type="entry name" value="50S ribosomal protein L16"/>
    <property type="match status" value="1"/>
</dbReference>
<dbReference type="Gene3D" id="3.90.1170.10">
    <property type="entry name" value="Ribosomal protein L10e/L16"/>
    <property type="match status" value="1"/>
</dbReference>
<dbReference type="HAMAP" id="MF_01342">
    <property type="entry name" value="Ribosomal_uL16"/>
    <property type="match status" value="1"/>
</dbReference>
<dbReference type="InterPro" id="IPR047873">
    <property type="entry name" value="Ribosomal_uL16"/>
</dbReference>
<dbReference type="InterPro" id="IPR000114">
    <property type="entry name" value="Ribosomal_uL16_bact-type"/>
</dbReference>
<dbReference type="InterPro" id="IPR020798">
    <property type="entry name" value="Ribosomal_uL16_CS"/>
</dbReference>
<dbReference type="InterPro" id="IPR016180">
    <property type="entry name" value="Ribosomal_uL16_dom"/>
</dbReference>
<dbReference type="InterPro" id="IPR036920">
    <property type="entry name" value="Ribosomal_uL16_sf"/>
</dbReference>
<dbReference type="NCBIfam" id="TIGR01164">
    <property type="entry name" value="rplP_bact"/>
    <property type="match status" value="1"/>
</dbReference>
<dbReference type="PANTHER" id="PTHR12220">
    <property type="entry name" value="50S/60S RIBOSOMAL PROTEIN L16"/>
    <property type="match status" value="1"/>
</dbReference>
<dbReference type="PANTHER" id="PTHR12220:SF13">
    <property type="entry name" value="LARGE RIBOSOMAL SUBUNIT PROTEIN UL16M"/>
    <property type="match status" value="1"/>
</dbReference>
<dbReference type="Pfam" id="PF00252">
    <property type="entry name" value="Ribosomal_L16"/>
    <property type="match status" value="1"/>
</dbReference>
<dbReference type="PRINTS" id="PR00060">
    <property type="entry name" value="RIBOSOMALL16"/>
</dbReference>
<dbReference type="SUPFAM" id="SSF54686">
    <property type="entry name" value="Ribosomal protein L16p/L10e"/>
    <property type="match status" value="1"/>
</dbReference>
<dbReference type="PROSITE" id="PS00586">
    <property type="entry name" value="RIBOSOMAL_L16_1"/>
    <property type="match status" value="1"/>
</dbReference>
<dbReference type="PROSITE" id="PS00701">
    <property type="entry name" value="RIBOSOMAL_L16_2"/>
    <property type="match status" value="1"/>
</dbReference>
<gene>
    <name evidence="1" type="primary">rplP</name>
    <name type="ordered locus">SAUSA300_2197</name>
</gene>
<protein>
    <recommendedName>
        <fullName evidence="1">Large ribosomal subunit protein uL16</fullName>
    </recommendedName>
    <alternativeName>
        <fullName evidence="3">50S ribosomal protein L16</fullName>
    </alternativeName>
</protein>
<keyword id="KW-0687">Ribonucleoprotein</keyword>
<keyword id="KW-0689">Ribosomal protein</keyword>
<keyword id="KW-0694">RNA-binding</keyword>
<keyword id="KW-0699">rRNA-binding</keyword>
<keyword id="KW-0820">tRNA-binding</keyword>